<reference key="1">
    <citation type="journal article" date="2004" name="Genome Res.">
        <title>Genome sequence of Haloarcula marismortui: a halophilic archaeon from the Dead Sea.</title>
        <authorList>
            <person name="Baliga N.S."/>
            <person name="Bonneau R."/>
            <person name="Facciotti M.T."/>
            <person name="Pan M."/>
            <person name="Glusman G."/>
            <person name="Deutsch E.W."/>
            <person name="Shannon P."/>
            <person name="Chiu Y."/>
            <person name="Weng R.S."/>
            <person name="Gan R.R."/>
            <person name="Hung P."/>
            <person name="Date S.V."/>
            <person name="Marcotte E."/>
            <person name="Hood L."/>
            <person name="Ng W.V."/>
        </authorList>
    </citation>
    <scope>NUCLEOTIDE SEQUENCE [LARGE SCALE GENOMIC DNA]</scope>
    <source>
        <strain>ATCC 43049 / DSM 3752 / JCM 8966 / VKM B-1809</strain>
    </source>
</reference>
<accession>Q5V1R7</accession>
<organism>
    <name type="scientific">Haloarcula marismortui (strain ATCC 43049 / DSM 3752 / JCM 8966 / VKM B-1809)</name>
    <name type="common">Halobacterium marismortui</name>
    <dbReference type="NCBI Taxonomy" id="272569"/>
    <lineage>
        <taxon>Archaea</taxon>
        <taxon>Methanobacteriati</taxon>
        <taxon>Methanobacteriota</taxon>
        <taxon>Stenosarchaea group</taxon>
        <taxon>Halobacteria</taxon>
        <taxon>Halobacteriales</taxon>
        <taxon>Haloarculaceae</taxon>
        <taxon>Haloarcula</taxon>
    </lineage>
</organism>
<evidence type="ECO:0000255" key="1">
    <source>
        <dbReference type="HAMAP-Rule" id="MF_01419"/>
    </source>
</evidence>
<proteinExistence type="inferred from homology"/>
<keyword id="KW-0119">Carbohydrate metabolism</keyword>
<keyword id="KW-0378">Hydrolase</keyword>
<keyword id="KW-0460">Magnesium</keyword>
<keyword id="KW-0479">Metal-binding</keyword>
<keyword id="KW-1185">Reference proteome</keyword>
<protein>
    <recommendedName>
        <fullName evidence="1">Phosphoglycolate phosphatase</fullName>
        <shortName evidence="1">PGP</shortName>
        <shortName evidence="1">PGPase</shortName>
        <ecNumber evidence="1">3.1.3.18</ecNumber>
    </recommendedName>
</protein>
<gene>
    <name type="ordered locus">rrnAC1620</name>
</gene>
<name>PGP_HALMA</name>
<dbReference type="EC" id="3.1.3.18" evidence="1"/>
<dbReference type="EMBL" id="AY596297">
    <property type="protein sequence ID" value="AAV46535.1"/>
    <property type="molecule type" value="Genomic_DNA"/>
</dbReference>
<dbReference type="RefSeq" id="WP_011223747.1">
    <property type="nucleotide sequence ID" value="NC_006396.1"/>
</dbReference>
<dbReference type="SMR" id="Q5V1R7"/>
<dbReference type="STRING" id="272569.rrnAC1620"/>
<dbReference type="PaxDb" id="272569-rrnAC1620"/>
<dbReference type="EnsemblBacteria" id="AAV46535">
    <property type="protein sequence ID" value="AAV46535"/>
    <property type="gene ID" value="rrnAC1620"/>
</dbReference>
<dbReference type="GeneID" id="40152585"/>
<dbReference type="KEGG" id="hma:rrnAC1620"/>
<dbReference type="PATRIC" id="fig|272569.17.peg.2308"/>
<dbReference type="eggNOG" id="arCOG01213">
    <property type="taxonomic scope" value="Archaea"/>
</dbReference>
<dbReference type="HOGENOM" id="CLU_044146_2_0_2"/>
<dbReference type="Proteomes" id="UP000001169">
    <property type="component" value="Chromosome I"/>
</dbReference>
<dbReference type="GO" id="GO:0005829">
    <property type="term" value="C:cytosol"/>
    <property type="evidence" value="ECO:0007669"/>
    <property type="project" value="TreeGrafter"/>
</dbReference>
<dbReference type="GO" id="GO:0000287">
    <property type="term" value="F:magnesium ion binding"/>
    <property type="evidence" value="ECO:0007669"/>
    <property type="project" value="InterPro"/>
</dbReference>
<dbReference type="GO" id="GO:0008967">
    <property type="term" value="F:phosphoglycolate phosphatase activity"/>
    <property type="evidence" value="ECO:0007669"/>
    <property type="project" value="UniProtKB-UniRule"/>
</dbReference>
<dbReference type="CDD" id="cd07514">
    <property type="entry name" value="HAD_Pase"/>
    <property type="match status" value="1"/>
</dbReference>
<dbReference type="Gene3D" id="3.90.1070.10">
    <property type="match status" value="1"/>
</dbReference>
<dbReference type="Gene3D" id="3.40.50.1000">
    <property type="entry name" value="HAD superfamily/HAD-like"/>
    <property type="match status" value="1"/>
</dbReference>
<dbReference type="HAMAP" id="MF_01419">
    <property type="entry name" value="GPH_hydrolase_arch"/>
    <property type="match status" value="1"/>
</dbReference>
<dbReference type="InterPro" id="IPR036412">
    <property type="entry name" value="HAD-like_sf"/>
</dbReference>
<dbReference type="InterPro" id="IPR006379">
    <property type="entry name" value="HAD-SF_hydro_IIB"/>
</dbReference>
<dbReference type="InterPro" id="IPR023214">
    <property type="entry name" value="HAD_sf"/>
</dbReference>
<dbReference type="InterPro" id="IPR006382">
    <property type="entry name" value="PGPase"/>
</dbReference>
<dbReference type="NCBIfam" id="TIGR01484">
    <property type="entry name" value="HAD-SF-IIB"/>
    <property type="match status" value="1"/>
</dbReference>
<dbReference type="NCBIfam" id="TIGR01487">
    <property type="entry name" value="Pglycolate_arch"/>
    <property type="match status" value="1"/>
</dbReference>
<dbReference type="NCBIfam" id="TIGR01482">
    <property type="entry name" value="SPP-subfamily"/>
    <property type="match status" value="1"/>
</dbReference>
<dbReference type="PANTHER" id="PTHR10000:SF8">
    <property type="entry name" value="HAD SUPERFAMILY HYDROLASE-LIKE, TYPE 3"/>
    <property type="match status" value="1"/>
</dbReference>
<dbReference type="PANTHER" id="PTHR10000">
    <property type="entry name" value="PHOSPHOSERINE PHOSPHATASE"/>
    <property type="match status" value="1"/>
</dbReference>
<dbReference type="Pfam" id="PF08282">
    <property type="entry name" value="Hydrolase_3"/>
    <property type="match status" value="2"/>
</dbReference>
<dbReference type="SFLD" id="SFLDG01140">
    <property type="entry name" value="C2.B:_Phosphomannomutase_and_P"/>
    <property type="match status" value="1"/>
</dbReference>
<dbReference type="SFLD" id="SFLDF00446">
    <property type="entry name" value="phosphoglycolate_phosphatase_3"/>
    <property type="match status" value="1"/>
</dbReference>
<dbReference type="SUPFAM" id="SSF56784">
    <property type="entry name" value="HAD-like"/>
    <property type="match status" value="1"/>
</dbReference>
<comment type="function">
    <text evidence="1">Catalyzes the dephosphorylation of 2-phosphoglycolate.</text>
</comment>
<comment type="catalytic activity">
    <reaction evidence="1">
        <text>2-phosphoglycolate + H2O = glycolate + phosphate</text>
        <dbReference type="Rhea" id="RHEA:14369"/>
        <dbReference type="ChEBI" id="CHEBI:15377"/>
        <dbReference type="ChEBI" id="CHEBI:29805"/>
        <dbReference type="ChEBI" id="CHEBI:43474"/>
        <dbReference type="ChEBI" id="CHEBI:58033"/>
        <dbReference type="EC" id="3.1.3.18"/>
    </reaction>
</comment>
<comment type="cofactor">
    <cofactor evidence="1">
        <name>Mg(2+)</name>
        <dbReference type="ChEBI" id="CHEBI:18420"/>
    </cofactor>
</comment>
<comment type="similarity">
    <text evidence="1">Belongs to the archaeal SPP-like hydrolase family.</text>
</comment>
<sequence length="227" mass="24333">MDSDTPPLIVDIDGTLTDESRALDPHVIPVLREWPARVVIATGKAMPFPIALCEFLGLDRTVVAENGGVVFVEATDELRLEGDHEAALAVGESYRDLGHDLGFGQIDLANRWRETELVVSLDQPLEPLEELAAARGLVVLDTGFAYHVTDPVVDKGTGLEAVCSELDLDPAEFLAVGDSVNDAQMFDLAGEAVAVANADETALERADRVTDASYGDGFLEAVAPYRD</sequence>
<feature type="chain" id="PRO_0000146715" description="Phosphoglycolate phosphatase">
    <location>
        <begin position="1"/>
        <end position="227"/>
    </location>
</feature>
<feature type="active site" description="Nucleophile" evidence="1">
    <location>
        <position position="11"/>
    </location>
</feature>
<feature type="binding site" evidence="1">
    <location>
        <position position="11"/>
    </location>
    <ligand>
        <name>Mg(2+)</name>
        <dbReference type="ChEBI" id="CHEBI:18420"/>
    </ligand>
</feature>
<feature type="binding site" evidence="1">
    <location>
        <position position="13"/>
    </location>
    <ligand>
        <name>Mg(2+)</name>
        <dbReference type="ChEBI" id="CHEBI:18420"/>
    </ligand>
</feature>
<feature type="binding site" evidence="1">
    <location>
        <position position="155"/>
    </location>
    <ligand>
        <name>substrate</name>
    </ligand>
</feature>
<feature type="binding site" evidence="1">
    <location>
        <position position="178"/>
    </location>
    <ligand>
        <name>Mg(2+)</name>
        <dbReference type="ChEBI" id="CHEBI:18420"/>
    </ligand>
</feature>
<feature type="binding site" evidence="1">
    <location>
        <position position="182"/>
    </location>
    <ligand>
        <name>Mg(2+)</name>
        <dbReference type="ChEBI" id="CHEBI:18420"/>
    </ligand>
</feature>